<organism>
    <name type="scientific">Halococcus morrhuae</name>
    <name type="common">Micrococcus morrhuae</name>
    <dbReference type="NCBI Taxonomy" id="2250"/>
    <lineage>
        <taxon>Archaea</taxon>
        <taxon>Methanobacteriati</taxon>
        <taxon>Methanobacteriota</taxon>
        <taxon>Stenosarchaea group</taxon>
        <taxon>Halobacteria</taxon>
        <taxon>Halobacteriales</taxon>
        <taxon>Halococcaceae</taxon>
        <taxon>Halococcus</taxon>
    </lineage>
</organism>
<comment type="function">
    <text evidence="1">Participates in transcription termination.</text>
</comment>
<comment type="subcellular location">
    <subcellularLocation>
        <location evidence="1">Cytoplasm</location>
    </subcellularLocation>
</comment>
<comment type="similarity">
    <text evidence="1">Belongs to the NusA family.</text>
</comment>
<sequence>MRVTLSDTALRHIALFEDVTGASAVDCLVDDDRVCFLVATGEMSDAIGPDGTTVEQVEERLDKRVSLVENADTAELFVANALAPAVVHNVTISENASTVAYAEVDRADTGVAIGRDGETIETARRLAERQFDIDDIELA</sequence>
<gene>
    <name evidence="1" type="primary">nusA</name>
</gene>
<accession>P15738</accession>
<protein>
    <recommendedName>
        <fullName evidence="1">Probable transcription termination protein NusA</fullName>
    </recommendedName>
</protein>
<feature type="chain" id="PRO_0000181981" description="Probable transcription termination protein NusA">
    <location>
        <begin position="1"/>
        <end position="139"/>
    </location>
</feature>
<feature type="domain" description="KH" evidence="1">
    <location>
        <begin position="97"/>
        <end position="139"/>
    </location>
</feature>
<reference key="1">
    <citation type="journal article" date="1989" name="J. Mol. Biol.">
        <title>Sequence, organization, transcription and evolution of RNA polymerase subunit genes from the archaebacterial extreme halophiles Halobacterium halobium and Halococcus morrhuae.</title>
        <authorList>
            <person name="Leffers H."/>
            <person name="Gropp F."/>
            <person name="Lottspeich F."/>
            <person name="Zillig W."/>
            <person name="Garrett R.A."/>
        </authorList>
    </citation>
    <scope>NUCLEOTIDE SEQUENCE [GENOMIC DNA]</scope>
    <source>
        <strain>ATCC 17082 / DSM 1307 / JCM 8876 / NBRC 14719 / NCIMB 787</strain>
    </source>
</reference>
<name>NUSA_HALMO</name>
<proteinExistence type="inferred from homology"/>
<dbReference type="EMBL" id="X57145">
    <property type="protein sequence ID" value="CAA40433.1"/>
    <property type="molecule type" value="Genomic_DNA"/>
</dbReference>
<dbReference type="PIR" id="S03580">
    <property type="entry name" value="S03580"/>
</dbReference>
<dbReference type="SMR" id="P15738"/>
<dbReference type="GO" id="GO:0005829">
    <property type="term" value="C:cytosol"/>
    <property type="evidence" value="ECO:0007669"/>
    <property type="project" value="TreeGrafter"/>
</dbReference>
<dbReference type="GO" id="GO:0003723">
    <property type="term" value="F:RNA binding"/>
    <property type="evidence" value="ECO:0007669"/>
    <property type="project" value="UniProtKB-KW"/>
</dbReference>
<dbReference type="GO" id="GO:0006353">
    <property type="term" value="P:DNA-templated transcription termination"/>
    <property type="evidence" value="ECO:0007669"/>
    <property type="project" value="UniProtKB-UniRule"/>
</dbReference>
<dbReference type="GO" id="GO:0031564">
    <property type="term" value="P:transcription antitermination"/>
    <property type="evidence" value="ECO:0007669"/>
    <property type="project" value="InterPro"/>
</dbReference>
<dbReference type="CDD" id="cd22530">
    <property type="entry name" value="KH-II_NusA_arch_rpt1"/>
    <property type="match status" value="1"/>
</dbReference>
<dbReference type="Gene3D" id="3.30.300.20">
    <property type="match status" value="2"/>
</dbReference>
<dbReference type="HAMAP" id="MF_00945_A">
    <property type="entry name" value="NusA_A"/>
    <property type="match status" value="1"/>
</dbReference>
<dbReference type="InterPro" id="IPR015946">
    <property type="entry name" value="KH_dom-like_a/b"/>
</dbReference>
<dbReference type="InterPro" id="IPR025249">
    <property type="entry name" value="KH_dom_NusA-like"/>
</dbReference>
<dbReference type="InterPro" id="IPR009019">
    <property type="entry name" value="KH_sf_prok-type"/>
</dbReference>
<dbReference type="InterPro" id="IPR010212">
    <property type="entry name" value="NusA_arc"/>
</dbReference>
<dbReference type="InterPro" id="IPR030842">
    <property type="entry name" value="NusA_bac"/>
</dbReference>
<dbReference type="NCBIfam" id="TIGR01952">
    <property type="entry name" value="nusA_arch"/>
    <property type="match status" value="1"/>
</dbReference>
<dbReference type="PANTHER" id="PTHR22648">
    <property type="entry name" value="TRANSCRIPTION TERMINATION FACTOR NUSA"/>
    <property type="match status" value="1"/>
</dbReference>
<dbReference type="PANTHER" id="PTHR22648:SF0">
    <property type="entry name" value="TRANSCRIPTION TERMINATION_ANTITERMINATION PROTEIN NUSA"/>
    <property type="match status" value="1"/>
</dbReference>
<dbReference type="Pfam" id="PF13184">
    <property type="entry name" value="KH_5"/>
    <property type="match status" value="1"/>
</dbReference>
<dbReference type="SUPFAM" id="SSF54814">
    <property type="entry name" value="Prokaryotic type KH domain (KH-domain type II)"/>
    <property type="match status" value="2"/>
</dbReference>
<keyword id="KW-0963">Cytoplasm</keyword>
<keyword id="KW-0694">RNA-binding</keyword>
<keyword id="KW-0804">Transcription</keyword>
<keyword id="KW-0805">Transcription regulation</keyword>
<keyword id="KW-0806">Transcription termination</keyword>
<evidence type="ECO:0000255" key="1">
    <source>
        <dbReference type="HAMAP-Rule" id="MF_00945"/>
    </source>
</evidence>